<comment type="subcellular location">
    <subcellularLocation>
        <location evidence="3">Cell membrane</location>
        <topology evidence="1">Multi-pass membrane protein</topology>
    </subcellularLocation>
    <subcellularLocation>
        <location evidence="2">Cell junction</location>
        <location evidence="2">Gap junction</location>
    </subcellularLocation>
    <text evidence="2">Co-localizes with unc-9 at the gap junctions formed between PLM and other neurons.</text>
</comment>
<comment type="similarity">
    <text evidence="3">Belongs to the band 7/mec-2 family.</text>
</comment>
<protein>
    <recommendedName>
        <fullName>Protein unc-1</fullName>
    </recommendedName>
    <alternativeName>
        <fullName>Uncoordinated protein 1</fullName>
    </alternativeName>
</protein>
<feature type="chain" id="PRO_0000094043" description="Protein unc-1">
    <location>
        <begin position="1"/>
        <end position="285"/>
    </location>
</feature>
<feature type="transmembrane region" description="Helical" evidence="1">
    <location>
        <begin position="27"/>
        <end position="47"/>
    </location>
</feature>
<feature type="transmembrane region" description="Helical" evidence="1">
    <location>
        <begin position="69"/>
        <end position="89"/>
    </location>
</feature>
<feature type="mutagenesis site" description="In e580; no effect on unc-9 localization to gap junction in PLM neurons." evidence="2">
    <original>E</original>
    <variation>V</variation>
    <location>
        <position position="184"/>
    </location>
</feature>
<reference key="1">
    <citation type="journal article" date="1998" name="Science">
        <title>Genome sequence of the nematode C. elegans: a platform for investigating biology.</title>
        <authorList>
            <consortium name="The C. elegans sequencing consortium"/>
        </authorList>
    </citation>
    <scope>NUCLEOTIDE SEQUENCE [LARGE SCALE GENOMIC DNA]</scope>
    <source>
        <strain>Bristol N2</strain>
    </source>
</reference>
<reference key="2">
    <citation type="journal article" date="2016" name="PLoS Genet.">
        <title>Regulation of Gap Junction Dynamics by UNC-44/ankyrin and UNC-33/CRMP through VAB-8 in C. elegans Neurons.</title>
        <authorList>
            <person name="Meng L."/>
            <person name="Chen C.H."/>
            <person name="Yan D."/>
        </authorList>
    </citation>
    <scope>SUBCELLULAR LOCATION</scope>
    <scope>MUTAGENESIS OF GLU-184</scope>
</reference>
<name>UNC1_CAEEL</name>
<gene>
    <name type="primary">unc-1</name>
    <name type="ORF">K03E6.5</name>
</gene>
<evidence type="ECO:0000255" key="1"/>
<evidence type="ECO:0000269" key="2">
    <source>
    </source>
</evidence>
<evidence type="ECO:0000305" key="3"/>
<organism>
    <name type="scientific">Caenorhabditis elegans</name>
    <dbReference type="NCBI Taxonomy" id="6239"/>
    <lineage>
        <taxon>Eukaryota</taxon>
        <taxon>Metazoa</taxon>
        <taxon>Ecdysozoa</taxon>
        <taxon>Nematoda</taxon>
        <taxon>Chromadorea</taxon>
        <taxon>Rhabditida</taxon>
        <taxon>Rhabditina</taxon>
        <taxon>Rhabditomorpha</taxon>
        <taxon>Rhabditoidea</taxon>
        <taxon>Rhabditidae</taxon>
        <taxon>Peloderinae</taxon>
        <taxon>Caenorhabditis</taxon>
    </lineage>
</organism>
<accession>Q21190</accession>
<sequence length="285" mass="31657">MSNKERTEPQWVTPSSNQDVPPDYETIGTIFGYALQALSWILIIVTFPFSMCVCLKVIKEYERVVIFRIGRLVFGGARGPGMIFIIPCIDTYRKIDLRVVSYAVPPQEILSKDSVTVSVDAVVYFRTSDPIASVNNVDDAIYSTKLLAQTTLRNALGMKTLTEMLTEREAIAQLCETILDEGTEHWGVKVERVEVKDIRLPQQLTRAMAAEAEAAREARAKVVAAEGEQKASRALKEAADVIQANPVALQLRHLQALNSIAAEHNSTIVFPVPVEMFGAFMKKDQ</sequence>
<keyword id="KW-0965">Cell junction</keyword>
<keyword id="KW-1003">Cell membrane</keyword>
<keyword id="KW-0303">Gap junction</keyword>
<keyword id="KW-0472">Membrane</keyword>
<keyword id="KW-1185">Reference proteome</keyword>
<keyword id="KW-0812">Transmembrane</keyword>
<keyword id="KW-1133">Transmembrane helix</keyword>
<proteinExistence type="evidence at protein level"/>
<dbReference type="EMBL" id="BX284606">
    <property type="protein sequence ID" value="CCD62863.1"/>
    <property type="molecule type" value="Genomic_DNA"/>
</dbReference>
<dbReference type="PIR" id="T34324">
    <property type="entry name" value="T34324"/>
</dbReference>
<dbReference type="RefSeq" id="NP_508202.1">
    <property type="nucleotide sequence ID" value="NM_075801.7"/>
</dbReference>
<dbReference type="SMR" id="Q21190"/>
<dbReference type="BioGRID" id="45411">
    <property type="interactions" value="3"/>
</dbReference>
<dbReference type="FunCoup" id="Q21190">
    <property type="interactions" value="10"/>
</dbReference>
<dbReference type="STRING" id="6239.K03E6.5b.1"/>
<dbReference type="PaxDb" id="6239-K03E6.5b"/>
<dbReference type="EnsemblMetazoa" id="K03E6.5a.1">
    <property type="protein sequence ID" value="K03E6.5a.1"/>
    <property type="gene ID" value="WBGene00006741"/>
</dbReference>
<dbReference type="GeneID" id="180458"/>
<dbReference type="KEGG" id="cel:CELE_K03E6.5"/>
<dbReference type="UCSC" id="K03E6.5a">
    <property type="organism name" value="c. elegans"/>
</dbReference>
<dbReference type="AGR" id="WB:WBGene00006741"/>
<dbReference type="CTD" id="180458"/>
<dbReference type="WormBase" id="K03E6.5a">
    <property type="protein sequence ID" value="CE28585"/>
    <property type="gene ID" value="WBGene00006741"/>
    <property type="gene designation" value="unc-1"/>
</dbReference>
<dbReference type="eggNOG" id="KOG2621">
    <property type="taxonomic scope" value="Eukaryota"/>
</dbReference>
<dbReference type="GeneTree" id="ENSGT01030000234614"/>
<dbReference type="HOGENOM" id="CLU_024949_3_0_1"/>
<dbReference type="InParanoid" id="Q21190"/>
<dbReference type="OrthoDB" id="2105077at2759"/>
<dbReference type="PhylomeDB" id="Q21190"/>
<dbReference type="PRO" id="PR:Q21190"/>
<dbReference type="Proteomes" id="UP000001940">
    <property type="component" value="Chromosome X"/>
</dbReference>
<dbReference type="Bgee" id="WBGene00006741">
    <property type="expression patterns" value="Expressed in pharyngeal muscle cell (C elegans) and 3 other cell types or tissues"/>
</dbReference>
<dbReference type="ExpressionAtlas" id="Q21190">
    <property type="expression patterns" value="baseline and differential"/>
</dbReference>
<dbReference type="GO" id="GO:0030424">
    <property type="term" value="C:axon"/>
    <property type="evidence" value="ECO:0000314"/>
    <property type="project" value="WormBase"/>
</dbReference>
<dbReference type="GO" id="GO:0005911">
    <property type="term" value="C:cell-cell junction"/>
    <property type="evidence" value="ECO:0000314"/>
    <property type="project" value="WormBase"/>
</dbReference>
<dbReference type="GO" id="GO:0005921">
    <property type="term" value="C:gap junction"/>
    <property type="evidence" value="ECO:0000314"/>
    <property type="project" value="UniProtKB"/>
</dbReference>
<dbReference type="GO" id="GO:0005886">
    <property type="term" value="C:plasma membrane"/>
    <property type="evidence" value="ECO:0000318"/>
    <property type="project" value="GO_Central"/>
</dbReference>
<dbReference type="GO" id="GO:0099106">
    <property type="term" value="F:ion channel regulator activity"/>
    <property type="evidence" value="ECO:0000315"/>
    <property type="project" value="WormBase"/>
</dbReference>
<dbReference type="GO" id="GO:0010650">
    <property type="term" value="P:positive regulation of cell communication by electrical coupling"/>
    <property type="evidence" value="ECO:0000315"/>
    <property type="project" value="WormBase"/>
</dbReference>
<dbReference type="GO" id="GO:0009410">
    <property type="term" value="P:response to xenobiotic stimulus"/>
    <property type="evidence" value="ECO:0000315"/>
    <property type="project" value="WormBase"/>
</dbReference>
<dbReference type="FunFam" id="3.30.479.30:FF:000002">
    <property type="entry name" value="band 7 protein AGAP004871"/>
    <property type="match status" value="1"/>
</dbReference>
<dbReference type="Gene3D" id="6.10.250.2090">
    <property type="match status" value="1"/>
</dbReference>
<dbReference type="Gene3D" id="3.30.479.30">
    <property type="entry name" value="Band 7 domain"/>
    <property type="match status" value="1"/>
</dbReference>
<dbReference type="InterPro" id="IPR043202">
    <property type="entry name" value="Band-7_stomatin-like"/>
</dbReference>
<dbReference type="InterPro" id="IPR001107">
    <property type="entry name" value="Band_7"/>
</dbReference>
<dbReference type="InterPro" id="IPR036013">
    <property type="entry name" value="Band_7/SPFH_dom_sf"/>
</dbReference>
<dbReference type="InterPro" id="IPR018080">
    <property type="entry name" value="Band_7/stomatin-like_CS"/>
</dbReference>
<dbReference type="InterPro" id="IPR001972">
    <property type="entry name" value="Stomatin_HflK_fam"/>
</dbReference>
<dbReference type="PANTHER" id="PTHR10264">
    <property type="entry name" value="BAND 7 PROTEIN-RELATED"/>
    <property type="match status" value="1"/>
</dbReference>
<dbReference type="PANTHER" id="PTHR10264:SF72">
    <property type="entry name" value="PROTEIN UNC-1"/>
    <property type="match status" value="1"/>
</dbReference>
<dbReference type="Pfam" id="PF01145">
    <property type="entry name" value="Band_7"/>
    <property type="match status" value="1"/>
</dbReference>
<dbReference type="PRINTS" id="PR00721">
    <property type="entry name" value="STOMATIN"/>
</dbReference>
<dbReference type="SMART" id="SM00244">
    <property type="entry name" value="PHB"/>
    <property type="match status" value="1"/>
</dbReference>
<dbReference type="SUPFAM" id="SSF117892">
    <property type="entry name" value="Band 7/SPFH domain"/>
    <property type="match status" value="1"/>
</dbReference>
<dbReference type="PROSITE" id="PS01270">
    <property type="entry name" value="BAND_7"/>
    <property type="match status" value="1"/>
</dbReference>